<dbReference type="EC" id="5.4.99.12" evidence="1"/>
<dbReference type="EMBL" id="CP001164">
    <property type="protein sequence ID" value="ACI36109.1"/>
    <property type="molecule type" value="Genomic_DNA"/>
</dbReference>
<dbReference type="RefSeq" id="WP_001283590.1">
    <property type="nucleotide sequence ID" value="NC_011353.1"/>
</dbReference>
<dbReference type="SMR" id="B5YXV8"/>
<dbReference type="GeneID" id="75172446"/>
<dbReference type="KEGG" id="ecf:ECH74115_3458"/>
<dbReference type="HOGENOM" id="CLU_014673_0_2_6"/>
<dbReference type="GO" id="GO:0003723">
    <property type="term" value="F:RNA binding"/>
    <property type="evidence" value="ECO:0007669"/>
    <property type="project" value="InterPro"/>
</dbReference>
<dbReference type="GO" id="GO:0160147">
    <property type="term" value="F:tRNA pseudouridine(38-40) synthase activity"/>
    <property type="evidence" value="ECO:0007669"/>
    <property type="project" value="UniProtKB-EC"/>
</dbReference>
<dbReference type="GO" id="GO:0031119">
    <property type="term" value="P:tRNA pseudouridine synthesis"/>
    <property type="evidence" value="ECO:0007669"/>
    <property type="project" value="UniProtKB-UniRule"/>
</dbReference>
<dbReference type="CDD" id="cd02570">
    <property type="entry name" value="PseudoU_synth_EcTruA"/>
    <property type="match status" value="1"/>
</dbReference>
<dbReference type="FunFam" id="3.30.70.580:FF:000001">
    <property type="entry name" value="tRNA pseudouridine synthase A"/>
    <property type="match status" value="1"/>
</dbReference>
<dbReference type="FunFam" id="3.30.70.660:FF:000001">
    <property type="entry name" value="tRNA pseudouridine synthase A"/>
    <property type="match status" value="1"/>
</dbReference>
<dbReference type="Gene3D" id="3.30.70.660">
    <property type="entry name" value="Pseudouridine synthase I, catalytic domain, C-terminal subdomain"/>
    <property type="match status" value="1"/>
</dbReference>
<dbReference type="Gene3D" id="3.30.70.580">
    <property type="entry name" value="Pseudouridine synthase I, catalytic domain, N-terminal subdomain"/>
    <property type="match status" value="1"/>
</dbReference>
<dbReference type="HAMAP" id="MF_00171">
    <property type="entry name" value="TruA"/>
    <property type="match status" value="1"/>
</dbReference>
<dbReference type="InterPro" id="IPR020103">
    <property type="entry name" value="PsdUridine_synth_cat_dom_sf"/>
</dbReference>
<dbReference type="InterPro" id="IPR001406">
    <property type="entry name" value="PsdUridine_synth_TruA"/>
</dbReference>
<dbReference type="InterPro" id="IPR020097">
    <property type="entry name" value="PsdUridine_synth_TruA_a/b_dom"/>
</dbReference>
<dbReference type="InterPro" id="IPR020095">
    <property type="entry name" value="PsdUridine_synth_TruA_C"/>
</dbReference>
<dbReference type="InterPro" id="IPR020094">
    <property type="entry name" value="TruA/RsuA/RluB/E/F_N"/>
</dbReference>
<dbReference type="NCBIfam" id="TIGR00071">
    <property type="entry name" value="hisT_truA"/>
    <property type="match status" value="1"/>
</dbReference>
<dbReference type="PANTHER" id="PTHR11142">
    <property type="entry name" value="PSEUDOURIDYLATE SYNTHASE"/>
    <property type="match status" value="1"/>
</dbReference>
<dbReference type="PANTHER" id="PTHR11142:SF0">
    <property type="entry name" value="TRNA PSEUDOURIDINE SYNTHASE-LIKE 1"/>
    <property type="match status" value="1"/>
</dbReference>
<dbReference type="Pfam" id="PF01416">
    <property type="entry name" value="PseudoU_synth_1"/>
    <property type="match status" value="2"/>
</dbReference>
<dbReference type="PIRSF" id="PIRSF001430">
    <property type="entry name" value="tRNA_psdUrid_synth"/>
    <property type="match status" value="1"/>
</dbReference>
<dbReference type="SUPFAM" id="SSF55120">
    <property type="entry name" value="Pseudouridine synthase"/>
    <property type="match status" value="1"/>
</dbReference>
<reference key="1">
    <citation type="journal article" date="2011" name="Proc. Natl. Acad. Sci. U.S.A.">
        <title>Genomic anatomy of Escherichia coli O157:H7 outbreaks.</title>
        <authorList>
            <person name="Eppinger M."/>
            <person name="Mammel M.K."/>
            <person name="Leclerc J.E."/>
            <person name="Ravel J."/>
            <person name="Cebula T.A."/>
        </authorList>
    </citation>
    <scope>NUCLEOTIDE SEQUENCE [LARGE SCALE GENOMIC DNA]</scope>
    <source>
        <strain>EC4115 / EHEC</strain>
    </source>
</reference>
<organism>
    <name type="scientific">Escherichia coli O157:H7 (strain EC4115 / EHEC)</name>
    <dbReference type="NCBI Taxonomy" id="444450"/>
    <lineage>
        <taxon>Bacteria</taxon>
        <taxon>Pseudomonadati</taxon>
        <taxon>Pseudomonadota</taxon>
        <taxon>Gammaproteobacteria</taxon>
        <taxon>Enterobacterales</taxon>
        <taxon>Enterobacteriaceae</taxon>
        <taxon>Escherichia</taxon>
    </lineage>
</organism>
<accession>B5YXV8</accession>
<proteinExistence type="inferred from homology"/>
<sequence>MSDQQQPPVYKIALGIEYDGSKYYGWQRQNEVRSVQEKLEKALSQVANEPITVFCAGRTDAGVHGTGQVVHFETTAQRKDAAWTLGVNANLPGDIAVRWVKAVPDDFHARFSATARRYRYIIYNHRLRPAVLSKGVTHFYEPLDAERMHRAAQCLLGENDFTSFRAVQCQSRTPWRNVMHINVTRHGPYVVVDIKANAFVHHMVRNIVGSLMEVGAHNQPESWIAELLAAKDRTLAAATAKAEGLYLVAVDYPDRYDLPKPPMGPLFLAD</sequence>
<protein>
    <recommendedName>
        <fullName evidence="1">tRNA pseudouridine synthase A</fullName>
        <ecNumber evidence="1">5.4.99.12</ecNumber>
    </recommendedName>
    <alternativeName>
        <fullName evidence="1">tRNA pseudouridine(38-40) synthase</fullName>
    </alternativeName>
    <alternativeName>
        <fullName evidence="1">tRNA pseudouridylate synthase I</fullName>
    </alternativeName>
    <alternativeName>
        <fullName evidence="1">tRNA-uridine isomerase I</fullName>
    </alternativeName>
</protein>
<gene>
    <name evidence="1" type="primary">truA</name>
    <name type="ordered locus">ECH74115_3458</name>
</gene>
<name>TRUA_ECO5E</name>
<evidence type="ECO:0000255" key="1">
    <source>
        <dbReference type="HAMAP-Rule" id="MF_00171"/>
    </source>
</evidence>
<feature type="chain" id="PRO_1000097739" description="tRNA pseudouridine synthase A">
    <location>
        <begin position="1"/>
        <end position="270"/>
    </location>
</feature>
<feature type="region of interest" description="RNA binding" evidence="1">
    <location>
        <begin position="107"/>
        <end position="111"/>
    </location>
</feature>
<feature type="region of interest" description="Interaction with tRNA" evidence="1">
    <location>
        <begin position="168"/>
        <end position="172"/>
    </location>
</feature>
<feature type="active site" description="Nucleophile" evidence="1">
    <location>
        <position position="60"/>
    </location>
</feature>
<feature type="binding site" evidence="1">
    <location>
        <position position="118"/>
    </location>
    <ligand>
        <name>substrate</name>
    </ligand>
</feature>
<feature type="site" description="Interaction with tRNA; Important for base-flipping" evidence="1">
    <location>
        <position position="58"/>
    </location>
</feature>
<feature type="site" description="Interaction with tRNA" evidence="1">
    <location>
        <position position="78"/>
    </location>
</feature>
<feature type="site" description="Interaction with tRNA" evidence="1">
    <location>
        <position position="110"/>
    </location>
</feature>
<feature type="site" description="Interaction with tRNA" evidence="1">
    <location>
        <position position="126"/>
    </location>
</feature>
<feature type="site" description="Interaction with tRNA" evidence="1">
    <location>
        <position position="139"/>
    </location>
</feature>
<comment type="function">
    <text evidence="1">Formation of pseudouridine at positions 38, 39 and 40 in the anticodon stem and loop of transfer RNAs.</text>
</comment>
<comment type="catalytic activity">
    <reaction evidence="1">
        <text>uridine(38/39/40) in tRNA = pseudouridine(38/39/40) in tRNA</text>
        <dbReference type="Rhea" id="RHEA:22376"/>
        <dbReference type="Rhea" id="RHEA-COMP:10085"/>
        <dbReference type="Rhea" id="RHEA-COMP:10087"/>
        <dbReference type="ChEBI" id="CHEBI:65314"/>
        <dbReference type="ChEBI" id="CHEBI:65315"/>
        <dbReference type="EC" id="5.4.99.12"/>
    </reaction>
</comment>
<comment type="subunit">
    <text evidence="1">Homodimer.</text>
</comment>
<comment type="similarity">
    <text evidence="1">Belongs to the tRNA pseudouridine synthase TruA family.</text>
</comment>
<keyword id="KW-0413">Isomerase</keyword>
<keyword id="KW-0819">tRNA processing</keyword>